<dbReference type="EC" id="3.1.1.31" evidence="1"/>
<dbReference type="EMBL" id="CP000034">
    <property type="protein sequence ID" value="ABB62106.1"/>
    <property type="molecule type" value="Genomic_DNA"/>
</dbReference>
<dbReference type="RefSeq" id="WP_000815435.1">
    <property type="nucleotide sequence ID" value="NC_007606.1"/>
</dbReference>
<dbReference type="RefSeq" id="YP_403597.1">
    <property type="nucleotide sequence ID" value="NC_007606.1"/>
</dbReference>
<dbReference type="SMR" id="Q32EZ9"/>
<dbReference type="STRING" id="300267.SDY_2011"/>
<dbReference type="EnsemblBacteria" id="ABB62106">
    <property type="protein sequence ID" value="ABB62106"/>
    <property type="gene ID" value="SDY_2011"/>
</dbReference>
<dbReference type="GeneID" id="86945650"/>
<dbReference type="KEGG" id="sdy:SDY_2011"/>
<dbReference type="PATRIC" id="fig|300267.13.peg.2424"/>
<dbReference type="HOGENOM" id="CLU_038716_2_0_6"/>
<dbReference type="UniPathway" id="UPA00115">
    <property type="reaction ID" value="UER00409"/>
</dbReference>
<dbReference type="Proteomes" id="UP000002716">
    <property type="component" value="Chromosome"/>
</dbReference>
<dbReference type="GO" id="GO:0005829">
    <property type="term" value="C:cytosol"/>
    <property type="evidence" value="ECO:0007669"/>
    <property type="project" value="TreeGrafter"/>
</dbReference>
<dbReference type="GO" id="GO:0017057">
    <property type="term" value="F:6-phosphogluconolactonase activity"/>
    <property type="evidence" value="ECO:0007669"/>
    <property type="project" value="UniProtKB-UniRule"/>
</dbReference>
<dbReference type="GO" id="GO:0006006">
    <property type="term" value="P:glucose metabolic process"/>
    <property type="evidence" value="ECO:0007669"/>
    <property type="project" value="UniProtKB-KW"/>
</dbReference>
<dbReference type="GO" id="GO:0009051">
    <property type="term" value="P:pentose-phosphate shunt, oxidative branch"/>
    <property type="evidence" value="ECO:0007669"/>
    <property type="project" value="UniProtKB-UniRule"/>
</dbReference>
<dbReference type="FunFam" id="2.130.10.10:FF:000051">
    <property type="entry name" value="6-phosphogluconolactonase"/>
    <property type="match status" value="1"/>
</dbReference>
<dbReference type="Gene3D" id="2.130.10.10">
    <property type="entry name" value="YVTN repeat-like/Quinoprotein amine dehydrogenase"/>
    <property type="match status" value="1"/>
</dbReference>
<dbReference type="HAMAP" id="MF_01605">
    <property type="entry name" value="6P_gluconolactonase"/>
    <property type="match status" value="1"/>
</dbReference>
<dbReference type="InterPro" id="IPR022528">
    <property type="entry name" value="6-phosphogluconolactonase_YbhE"/>
</dbReference>
<dbReference type="InterPro" id="IPR050282">
    <property type="entry name" value="Cycloisomerase_2"/>
</dbReference>
<dbReference type="InterPro" id="IPR019405">
    <property type="entry name" value="Lactonase_7-beta_prop"/>
</dbReference>
<dbReference type="InterPro" id="IPR011045">
    <property type="entry name" value="N2O_reductase_N"/>
</dbReference>
<dbReference type="InterPro" id="IPR015943">
    <property type="entry name" value="WD40/YVTN_repeat-like_dom_sf"/>
</dbReference>
<dbReference type="NCBIfam" id="NF008258">
    <property type="entry name" value="PRK11028.1"/>
    <property type="match status" value="1"/>
</dbReference>
<dbReference type="PANTHER" id="PTHR30344:SF1">
    <property type="entry name" value="6-PHOSPHOGLUCONOLACTONASE"/>
    <property type="match status" value="1"/>
</dbReference>
<dbReference type="PANTHER" id="PTHR30344">
    <property type="entry name" value="6-PHOSPHOGLUCONOLACTONASE-RELATED"/>
    <property type="match status" value="1"/>
</dbReference>
<dbReference type="Pfam" id="PF10282">
    <property type="entry name" value="Lactonase"/>
    <property type="match status" value="1"/>
</dbReference>
<dbReference type="SUPFAM" id="SSF50974">
    <property type="entry name" value="Nitrous oxide reductase, N-terminal domain"/>
    <property type="match status" value="1"/>
</dbReference>
<organism>
    <name type="scientific">Shigella dysenteriae serotype 1 (strain Sd197)</name>
    <dbReference type="NCBI Taxonomy" id="300267"/>
    <lineage>
        <taxon>Bacteria</taxon>
        <taxon>Pseudomonadati</taxon>
        <taxon>Pseudomonadota</taxon>
        <taxon>Gammaproteobacteria</taxon>
        <taxon>Enterobacterales</taxon>
        <taxon>Enterobacteriaceae</taxon>
        <taxon>Shigella</taxon>
    </lineage>
</organism>
<reference key="1">
    <citation type="journal article" date="2005" name="Nucleic Acids Res.">
        <title>Genome dynamics and diversity of Shigella species, the etiologic agents of bacillary dysentery.</title>
        <authorList>
            <person name="Yang F."/>
            <person name="Yang J."/>
            <person name="Zhang X."/>
            <person name="Chen L."/>
            <person name="Jiang Y."/>
            <person name="Yan Y."/>
            <person name="Tang X."/>
            <person name="Wang J."/>
            <person name="Xiong Z."/>
            <person name="Dong J."/>
            <person name="Xue Y."/>
            <person name="Zhu Y."/>
            <person name="Xu X."/>
            <person name="Sun L."/>
            <person name="Chen S."/>
            <person name="Nie H."/>
            <person name="Peng J."/>
            <person name="Xu J."/>
            <person name="Wang Y."/>
            <person name="Yuan Z."/>
            <person name="Wen Y."/>
            <person name="Yao Z."/>
            <person name="Shen Y."/>
            <person name="Qiang B."/>
            <person name="Hou Y."/>
            <person name="Yu J."/>
            <person name="Jin Q."/>
        </authorList>
    </citation>
    <scope>NUCLEOTIDE SEQUENCE [LARGE SCALE GENOMIC DNA]</scope>
    <source>
        <strain>Sd197</strain>
    </source>
</reference>
<proteinExistence type="inferred from homology"/>
<gene>
    <name evidence="1" type="primary">pgl</name>
    <name type="ordered locus">SDY_2011</name>
</gene>
<feature type="chain" id="PRO_0000291470" description="6-phosphogluconolactonase">
    <location>
        <begin position="1"/>
        <end position="331"/>
    </location>
</feature>
<feature type="modified residue" description="N6-acetyllysine" evidence="1">
    <location>
        <position position="287"/>
    </location>
</feature>
<name>6PGL_SHIDS</name>
<comment type="function">
    <text evidence="1">Catalyzes the hydrolysis of 6-phosphogluconolactone to 6-phosphogluconate.</text>
</comment>
<comment type="catalytic activity">
    <reaction evidence="1">
        <text>6-phospho-D-glucono-1,5-lactone + H2O = 6-phospho-D-gluconate + H(+)</text>
        <dbReference type="Rhea" id="RHEA:12556"/>
        <dbReference type="ChEBI" id="CHEBI:15377"/>
        <dbReference type="ChEBI" id="CHEBI:15378"/>
        <dbReference type="ChEBI" id="CHEBI:57955"/>
        <dbReference type="ChEBI" id="CHEBI:58759"/>
        <dbReference type="EC" id="3.1.1.31"/>
    </reaction>
</comment>
<comment type="pathway">
    <text evidence="1">Carbohydrate degradation; pentose phosphate pathway; D-ribulose 5-phosphate from D-glucose 6-phosphate (oxidative stage): step 2/3.</text>
</comment>
<comment type="similarity">
    <text evidence="1">Belongs to the cycloisomerase 2 family.</text>
</comment>
<sequence length="331" mass="36308">MKQTVYIASPESQQIHVWNLNHEGALTLTQVVDVPGQVQPMVVSPDKRYLYVGVRPEFRVLAYRIAPDDGALTFAAESALPGSPTHISTDHQGQFVFVGSYNAGNVSVTRLEDGLPVGVVDVVEGLDGCHSANISPDNRTLWVPALKQDRICLFTVSDDGHLVAQDPAEVTTVEGAGPRHMVFHPNEQYAYCVNELNSSVDVWELKDPHGNIECVQTLDMMPENFSDTRWAADIHITPDGRHLYACDRTASLITVFSVSEDGSVLSKEGFQPTETQPRGFNVDHSGKYLIAAGQKSHHISVYEIVGEQGLLHEKGRYAVGQGPMWVVVNAH</sequence>
<protein>
    <recommendedName>
        <fullName evidence="1">6-phosphogluconolactonase</fullName>
        <shortName evidence="1">6-P-gluconolactonase</shortName>
        <ecNumber evidence="1">3.1.1.31</ecNumber>
    </recommendedName>
</protein>
<keyword id="KW-0007">Acetylation</keyword>
<keyword id="KW-0119">Carbohydrate metabolism</keyword>
<keyword id="KW-0313">Glucose metabolism</keyword>
<keyword id="KW-0378">Hydrolase</keyword>
<keyword id="KW-1185">Reference proteome</keyword>
<evidence type="ECO:0000255" key="1">
    <source>
        <dbReference type="HAMAP-Rule" id="MF_01605"/>
    </source>
</evidence>
<accession>Q32EZ9</accession>